<evidence type="ECO:0000255" key="1">
    <source>
        <dbReference type="HAMAP-Rule" id="MF_01345"/>
    </source>
</evidence>
<evidence type="ECO:0000305" key="2"/>
<dbReference type="EMBL" id="CU459141">
    <property type="protein sequence ID" value="CAM85391.1"/>
    <property type="molecule type" value="Genomic_DNA"/>
</dbReference>
<dbReference type="RefSeq" id="WP_001291845.1">
    <property type="nucleotide sequence ID" value="NZ_JBDGFB010000011.1"/>
</dbReference>
<dbReference type="SMR" id="B0V6X7"/>
<dbReference type="EnsemblBacteria" id="CAM85391">
    <property type="protein sequence ID" value="CAM85391"/>
    <property type="gene ID" value="ABAYE0417"/>
</dbReference>
<dbReference type="GeneID" id="9380825"/>
<dbReference type="KEGG" id="aby:ABAYE0417"/>
<dbReference type="HOGENOM" id="CLU_073626_1_1_6"/>
<dbReference type="GO" id="GO:0022627">
    <property type="term" value="C:cytosolic small ribosomal subunit"/>
    <property type="evidence" value="ECO:0007669"/>
    <property type="project" value="TreeGrafter"/>
</dbReference>
<dbReference type="GO" id="GO:0019843">
    <property type="term" value="F:rRNA binding"/>
    <property type="evidence" value="ECO:0007669"/>
    <property type="project" value="UniProtKB-UniRule"/>
</dbReference>
<dbReference type="GO" id="GO:0003735">
    <property type="term" value="F:structural constituent of ribosome"/>
    <property type="evidence" value="ECO:0007669"/>
    <property type="project" value="InterPro"/>
</dbReference>
<dbReference type="GO" id="GO:0006412">
    <property type="term" value="P:translation"/>
    <property type="evidence" value="ECO:0007669"/>
    <property type="project" value="UniProtKB-UniRule"/>
</dbReference>
<dbReference type="CDD" id="cd00364">
    <property type="entry name" value="Ribosomal_uS17"/>
    <property type="match status" value="1"/>
</dbReference>
<dbReference type="FunFam" id="2.40.50.140:FF:000014">
    <property type="entry name" value="30S ribosomal protein S17"/>
    <property type="match status" value="1"/>
</dbReference>
<dbReference type="Gene3D" id="2.40.50.140">
    <property type="entry name" value="Nucleic acid-binding proteins"/>
    <property type="match status" value="1"/>
</dbReference>
<dbReference type="HAMAP" id="MF_01345_B">
    <property type="entry name" value="Ribosomal_uS17_B"/>
    <property type="match status" value="1"/>
</dbReference>
<dbReference type="InterPro" id="IPR012340">
    <property type="entry name" value="NA-bd_OB-fold"/>
</dbReference>
<dbReference type="InterPro" id="IPR000266">
    <property type="entry name" value="Ribosomal_uS17"/>
</dbReference>
<dbReference type="InterPro" id="IPR019984">
    <property type="entry name" value="Ribosomal_uS17_bact/chlr"/>
</dbReference>
<dbReference type="InterPro" id="IPR019979">
    <property type="entry name" value="Ribosomal_uS17_CS"/>
</dbReference>
<dbReference type="NCBIfam" id="NF004123">
    <property type="entry name" value="PRK05610.1"/>
    <property type="match status" value="1"/>
</dbReference>
<dbReference type="NCBIfam" id="TIGR03635">
    <property type="entry name" value="uS17_bact"/>
    <property type="match status" value="1"/>
</dbReference>
<dbReference type="PANTHER" id="PTHR10744">
    <property type="entry name" value="40S RIBOSOMAL PROTEIN S11 FAMILY MEMBER"/>
    <property type="match status" value="1"/>
</dbReference>
<dbReference type="PANTHER" id="PTHR10744:SF1">
    <property type="entry name" value="SMALL RIBOSOMAL SUBUNIT PROTEIN US17M"/>
    <property type="match status" value="1"/>
</dbReference>
<dbReference type="Pfam" id="PF00366">
    <property type="entry name" value="Ribosomal_S17"/>
    <property type="match status" value="1"/>
</dbReference>
<dbReference type="PRINTS" id="PR00973">
    <property type="entry name" value="RIBOSOMALS17"/>
</dbReference>
<dbReference type="SUPFAM" id="SSF50249">
    <property type="entry name" value="Nucleic acid-binding proteins"/>
    <property type="match status" value="1"/>
</dbReference>
<dbReference type="PROSITE" id="PS00056">
    <property type="entry name" value="RIBOSOMAL_S17"/>
    <property type="match status" value="1"/>
</dbReference>
<protein>
    <recommendedName>
        <fullName evidence="1">Small ribosomal subunit protein uS17</fullName>
    </recommendedName>
    <alternativeName>
        <fullName evidence="2">30S ribosomal protein S17</fullName>
    </alternativeName>
</protein>
<proteinExistence type="inferred from homology"/>
<name>RS17_ACIBY</name>
<accession>B0V6X7</accession>
<gene>
    <name evidence="1" type="primary">rpsQ</name>
    <name type="ordered locus">ABAYE0417</name>
</gene>
<feature type="chain" id="PRO_1000143211" description="Small ribosomal subunit protein uS17">
    <location>
        <begin position="1"/>
        <end position="85"/>
    </location>
</feature>
<organism>
    <name type="scientific">Acinetobacter baumannii (strain AYE)</name>
    <dbReference type="NCBI Taxonomy" id="509173"/>
    <lineage>
        <taxon>Bacteria</taxon>
        <taxon>Pseudomonadati</taxon>
        <taxon>Pseudomonadota</taxon>
        <taxon>Gammaproteobacteria</taxon>
        <taxon>Moraxellales</taxon>
        <taxon>Moraxellaceae</taxon>
        <taxon>Acinetobacter</taxon>
        <taxon>Acinetobacter calcoaceticus/baumannii complex</taxon>
    </lineage>
</organism>
<sequence length="85" mass="9524">MSEKTVRTLTGKVVSDKMDKSIVVLIERRVQHPLYGKSIRRSTKLHAHDENNVAKIGDVVTIKESRPISKTKAWTLVEVVEAAAE</sequence>
<comment type="function">
    <text evidence="1">One of the primary rRNA binding proteins, it binds specifically to the 5'-end of 16S ribosomal RNA.</text>
</comment>
<comment type="subunit">
    <text evidence="1">Part of the 30S ribosomal subunit.</text>
</comment>
<comment type="similarity">
    <text evidence="1">Belongs to the universal ribosomal protein uS17 family.</text>
</comment>
<keyword id="KW-0687">Ribonucleoprotein</keyword>
<keyword id="KW-0689">Ribosomal protein</keyword>
<keyword id="KW-0694">RNA-binding</keyword>
<keyword id="KW-0699">rRNA-binding</keyword>
<reference key="1">
    <citation type="journal article" date="2008" name="PLoS ONE">
        <title>Comparative analysis of Acinetobacters: three genomes for three lifestyles.</title>
        <authorList>
            <person name="Vallenet D."/>
            <person name="Nordmann P."/>
            <person name="Barbe V."/>
            <person name="Poirel L."/>
            <person name="Mangenot S."/>
            <person name="Bataille E."/>
            <person name="Dossat C."/>
            <person name="Gas S."/>
            <person name="Kreimeyer A."/>
            <person name="Lenoble P."/>
            <person name="Oztas S."/>
            <person name="Poulain J."/>
            <person name="Segurens B."/>
            <person name="Robert C."/>
            <person name="Abergel C."/>
            <person name="Claverie J.-M."/>
            <person name="Raoult D."/>
            <person name="Medigue C."/>
            <person name="Weissenbach J."/>
            <person name="Cruveiller S."/>
        </authorList>
    </citation>
    <scope>NUCLEOTIDE SEQUENCE [LARGE SCALE GENOMIC DNA]</scope>
    <source>
        <strain>AYE</strain>
    </source>
</reference>